<organism>
    <name type="scientific">Caulobacter vibrioides (strain ATCC 19089 / CIP 103742 / CB 15)</name>
    <name type="common">Caulobacter crescentus</name>
    <dbReference type="NCBI Taxonomy" id="190650"/>
    <lineage>
        <taxon>Bacteria</taxon>
        <taxon>Pseudomonadati</taxon>
        <taxon>Pseudomonadota</taxon>
        <taxon>Alphaproteobacteria</taxon>
        <taxon>Caulobacterales</taxon>
        <taxon>Caulobacteraceae</taxon>
        <taxon>Caulobacter</taxon>
    </lineage>
</organism>
<accession>Q9ABK1</accession>
<keyword id="KW-1185">Reference proteome</keyword>
<sequence length="91" mass="10132">MNISKPQQRTLHALAQGGRIELERDDNGRIISADCLTRDGWALTDCTVAVFQSLKRKRLIASQDGGPYRITRLGLANLRAQLDNRVGAKAW</sequence>
<gene>
    <name type="ordered locus">CC_0226</name>
</gene>
<name>Y226_CAUVC</name>
<reference key="1">
    <citation type="journal article" date="2001" name="Proc. Natl. Acad. Sci. U.S.A.">
        <title>Complete genome sequence of Caulobacter crescentus.</title>
        <authorList>
            <person name="Nierman W.C."/>
            <person name="Feldblyum T.V."/>
            <person name="Laub M.T."/>
            <person name="Paulsen I.T."/>
            <person name="Nelson K.E."/>
            <person name="Eisen J.A."/>
            <person name="Heidelberg J.F."/>
            <person name="Alley M.R.K."/>
            <person name="Ohta N."/>
            <person name="Maddock J.R."/>
            <person name="Potocka I."/>
            <person name="Nelson W.C."/>
            <person name="Newton A."/>
            <person name="Stephens C."/>
            <person name="Phadke N.D."/>
            <person name="Ely B."/>
            <person name="DeBoy R.T."/>
            <person name="Dodson R.J."/>
            <person name="Durkin A.S."/>
            <person name="Gwinn M.L."/>
            <person name="Haft D.H."/>
            <person name="Kolonay J.F."/>
            <person name="Smit J."/>
            <person name="Craven M.B."/>
            <person name="Khouri H.M."/>
            <person name="Shetty J."/>
            <person name="Berry K.J."/>
            <person name="Utterback T.R."/>
            <person name="Tran K."/>
            <person name="Wolf A.M."/>
            <person name="Vamathevan J.J."/>
            <person name="Ermolaeva M.D."/>
            <person name="White O."/>
            <person name="Salzberg S.L."/>
            <person name="Venter J.C."/>
            <person name="Shapiro L."/>
            <person name="Fraser C.M."/>
        </authorList>
    </citation>
    <scope>NUCLEOTIDE SEQUENCE [LARGE SCALE GENOMIC DNA]</scope>
    <source>
        <strain>ATCC 19089 / CIP 103742 / CB 15</strain>
    </source>
</reference>
<proteinExistence type="inferred from homology"/>
<feature type="chain" id="PRO_0000252177" description="UPF0386 protein CC_0226">
    <location>
        <begin position="1"/>
        <end position="91"/>
    </location>
</feature>
<protein>
    <recommendedName>
        <fullName evidence="1">UPF0386 protein CC_0226</fullName>
    </recommendedName>
</protein>
<comment type="similarity">
    <text evidence="1">Belongs to the UPF0386 family.</text>
</comment>
<comment type="sequence caution" evidence="2">
    <conflict type="erroneous initiation">
        <sequence resource="EMBL-CDS" id="AAK22213"/>
    </conflict>
</comment>
<dbReference type="EMBL" id="AE005673">
    <property type="protein sequence ID" value="AAK22213.1"/>
    <property type="status" value="ALT_INIT"/>
    <property type="molecule type" value="Genomic_DNA"/>
</dbReference>
<dbReference type="PIR" id="A87277">
    <property type="entry name" value="A87277"/>
</dbReference>
<dbReference type="RefSeq" id="NP_419045.1">
    <property type="nucleotide sequence ID" value="NC_002696.2"/>
</dbReference>
<dbReference type="RefSeq" id="WP_012639915.1">
    <property type="nucleotide sequence ID" value="NC_002696.2"/>
</dbReference>
<dbReference type="STRING" id="190650.CC_0226"/>
<dbReference type="EnsemblBacteria" id="AAK22213">
    <property type="protein sequence ID" value="AAK22213"/>
    <property type="gene ID" value="CC_0226"/>
</dbReference>
<dbReference type="KEGG" id="ccr:CC_0226"/>
<dbReference type="PATRIC" id="fig|190650.5.peg.221"/>
<dbReference type="eggNOG" id="COG3811">
    <property type="taxonomic scope" value="Bacteria"/>
</dbReference>
<dbReference type="HOGENOM" id="CLU_1913309_0_0_5"/>
<dbReference type="Proteomes" id="UP000001816">
    <property type="component" value="Chromosome"/>
</dbReference>
<dbReference type="HAMAP" id="MF_00827">
    <property type="entry name" value="UPF0386"/>
    <property type="match status" value="1"/>
</dbReference>
<dbReference type="InterPro" id="IPR018654">
    <property type="entry name" value="YjhX_toxin"/>
</dbReference>
<dbReference type="NCBIfam" id="NF010240">
    <property type="entry name" value="PRK13687.1"/>
    <property type="match status" value="1"/>
</dbReference>
<dbReference type="Pfam" id="PF09857">
    <property type="entry name" value="YjhX_toxin"/>
    <property type="match status" value="1"/>
</dbReference>
<evidence type="ECO:0000255" key="1">
    <source>
        <dbReference type="HAMAP-Rule" id="MF_00827"/>
    </source>
</evidence>
<evidence type="ECO:0000305" key="2"/>